<accession>Q59SN0</accession>
<accession>A0A1D8PTD4</accession>
<proteinExistence type="inferred from homology"/>
<name>RRP36_CANAL</name>
<dbReference type="EMBL" id="CP017630">
    <property type="protein sequence ID" value="AOW31398.1"/>
    <property type="molecule type" value="Genomic_DNA"/>
</dbReference>
<dbReference type="RefSeq" id="XP_712652.2">
    <property type="nucleotide sequence ID" value="XM_707559.2"/>
</dbReference>
<dbReference type="SMR" id="Q59SN0"/>
<dbReference type="FunCoup" id="Q59SN0">
    <property type="interactions" value="587"/>
</dbReference>
<dbReference type="STRING" id="237561.Q59SN0"/>
<dbReference type="EnsemblFungi" id="CR_07030C_A-T">
    <property type="protein sequence ID" value="CR_07030C_A-T-p1"/>
    <property type="gene ID" value="CR_07030C_A"/>
</dbReference>
<dbReference type="GeneID" id="3645730"/>
<dbReference type="KEGG" id="cal:CAALFM_CR07030CA"/>
<dbReference type="CGD" id="CAL0000179560">
    <property type="gene designation" value="orf19.9898"/>
</dbReference>
<dbReference type="VEuPathDB" id="FungiDB:CR_07030C_A"/>
<dbReference type="eggNOG" id="KOG3190">
    <property type="taxonomic scope" value="Eukaryota"/>
</dbReference>
<dbReference type="HOGENOM" id="CLU_048802_3_0_1"/>
<dbReference type="InParanoid" id="Q59SN0"/>
<dbReference type="OrthoDB" id="448446at2759"/>
<dbReference type="PRO" id="PR:Q59SN0"/>
<dbReference type="Proteomes" id="UP000000559">
    <property type="component" value="Chromosome R"/>
</dbReference>
<dbReference type="GO" id="GO:0030686">
    <property type="term" value="C:90S preribosome"/>
    <property type="evidence" value="ECO:0000318"/>
    <property type="project" value="GO_Central"/>
</dbReference>
<dbReference type="GO" id="GO:0005730">
    <property type="term" value="C:nucleolus"/>
    <property type="evidence" value="ECO:0000318"/>
    <property type="project" value="GO_Central"/>
</dbReference>
<dbReference type="GO" id="GO:0032040">
    <property type="term" value="C:small-subunit processome"/>
    <property type="evidence" value="ECO:0007669"/>
    <property type="project" value="EnsemblFungi"/>
</dbReference>
<dbReference type="GO" id="GO:0000462">
    <property type="term" value="P:maturation of SSU-rRNA from tricistronic rRNA transcript (SSU-rRNA, 5.8S rRNA, LSU-rRNA)"/>
    <property type="evidence" value="ECO:0000318"/>
    <property type="project" value="GO_Central"/>
</dbReference>
<dbReference type="InterPro" id="IPR009292">
    <property type="entry name" value="RRP36"/>
</dbReference>
<dbReference type="PANTHER" id="PTHR21738">
    <property type="entry name" value="RIBOSOMAL RNA PROCESSING PROTEIN 36 HOMOLOG"/>
    <property type="match status" value="1"/>
</dbReference>
<dbReference type="PANTHER" id="PTHR21738:SF0">
    <property type="entry name" value="RIBOSOMAL RNA PROCESSING PROTEIN 36 HOMOLOG"/>
    <property type="match status" value="1"/>
</dbReference>
<dbReference type="Pfam" id="PF06102">
    <property type="entry name" value="RRP36"/>
    <property type="match status" value="1"/>
</dbReference>
<keyword id="KW-0175">Coiled coil</keyword>
<keyword id="KW-0539">Nucleus</keyword>
<keyword id="KW-1185">Reference proteome</keyword>
<keyword id="KW-0687">Ribonucleoprotein</keyword>
<keyword id="KW-0690">Ribosome biogenesis</keyword>
<keyword id="KW-0698">rRNA processing</keyword>
<protein>
    <recommendedName>
        <fullName>rRNA biogenesis protein RRP36</fullName>
    </recommendedName>
    <alternativeName>
        <fullName>Ribosomal RNA-processing protein 36</fullName>
    </alternativeName>
</protein>
<feature type="chain" id="PRO_0000397623" description="rRNA biogenesis protein RRP36">
    <location>
        <begin position="1"/>
        <end position="281"/>
    </location>
</feature>
<feature type="region of interest" description="Disordered" evidence="3">
    <location>
        <begin position="1"/>
        <end position="135"/>
    </location>
</feature>
<feature type="region of interest" description="Disordered" evidence="3">
    <location>
        <begin position="243"/>
        <end position="281"/>
    </location>
</feature>
<feature type="coiled-coil region" evidence="2">
    <location>
        <begin position="48"/>
        <end position="78"/>
    </location>
</feature>
<feature type="coiled-coil region" evidence="2">
    <location>
        <begin position="161"/>
        <end position="205"/>
    </location>
</feature>
<feature type="compositionally biased region" description="Polar residues" evidence="3">
    <location>
        <begin position="24"/>
        <end position="36"/>
    </location>
</feature>
<feature type="compositionally biased region" description="Basic and acidic residues" evidence="3">
    <location>
        <begin position="65"/>
        <end position="75"/>
    </location>
</feature>
<feature type="compositionally biased region" description="Acidic residues" evidence="3">
    <location>
        <begin position="76"/>
        <end position="89"/>
    </location>
</feature>
<feature type="compositionally biased region" description="Basic and acidic residues" evidence="3">
    <location>
        <begin position="245"/>
        <end position="259"/>
    </location>
</feature>
<organism>
    <name type="scientific">Candida albicans (strain SC5314 / ATCC MYA-2876)</name>
    <name type="common">Yeast</name>
    <dbReference type="NCBI Taxonomy" id="237561"/>
    <lineage>
        <taxon>Eukaryota</taxon>
        <taxon>Fungi</taxon>
        <taxon>Dikarya</taxon>
        <taxon>Ascomycota</taxon>
        <taxon>Saccharomycotina</taxon>
        <taxon>Pichiomycetes</taxon>
        <taxon>Debaryomycetaceae</taxon>
        <taxon>Candida/Lodderomyces clade</taxon>
        <taxon>Candida</taxon>
    </lineage>
</organism>
<comment type="function">
    <text evidence="1">Component of the 90S pre-ribosome involved in the maturation of rRNAs. Required for early cleavages of the pre-RNAs in the 40S ribosomal subunit maturation pathway (By similarity).</text>
</comment>
<comment type="subunit">
    <text evidence="1">Associates with 90S and pre-40S pre-ribosomal particles.</text>
</comment>
<comment type="subcellular location">
    <subcellularLocation>
        <location evidence="1">Nucleus</location>
        <location evidence="1">Nucleolus</location>
    </subcellularLocation>
</comment>
<comment type="similarity">
    <text evidence="4">Belongs to the RRP36 family.</text>
</comment>
<reference key="1">
    <citation type="journal article" date="2004" name="Proc. Natl. Acad. Sci. U.S.A.">
        <title>The diploid genome sequence of Candida albicans.</title>
        <authorList>
            <person name="Jones T."/>
            <person name="Federspiel N.A."/>
            <person name="Chibana H."/>
            <person name="Dungan J."/>
            <person name="Kalman S."/>
            <person name="Magee B.B."/>
            <person name="Newport G."/>
            <person name="Thorstenson Y.R."/>
            <person name="Agabian N."/>
            <person name="Magee P.T."/>
            <person name="Davis R.W."/>
            <person name="Scherer S."/>
        </authorList>
    </citation>
    <scope>NUCLEOTIDE SEQUENCE [LARGE SCALE GENOMIC DNA]</scope>
    <source>
        <strain>SC5314 / ATCC MYA-2876</strain>
    </source>
</reference>
<reference key="2">
    <citation type="journal article" date="2007" name="Genome Biol.">
        <title>Assembly of the Candida albicans genome into sixteen supercontigs aligned on the eight chromosomes.</title>
        <authorList>
            <person name="van het Hoog M."/>
            <person name="Rast T.J."/>
            <person name="Martchenko M."/>
            <person name="Grindle S."/>
            <person name="Dignard D."/>
            <person name="Hogues H."/>
            <person name="Cuomo C."/>
            <person name="Berriman M."/>
            <person name="Scherer S."/>
            <person name="Magee B.B."/>
            <person name="Whiteway M."/>
            <person name="Chibana H."/>
            <person name="Nantel A."/>
            <person name="Magee P.T."/>
        </authorList>
    </citation>
    <scope>GENOME REANNOTATION</scope>
    <source>
        <strain>SC5314 / ATCC MYA-2876</strain>
    </source>
</reference>
<reference key="3">
    <citation type="journal article" date="2013" name="Genome Biol.">
        <title>Assembly of a phased diploid Candida albicans genome facilitates allele-specific measurements and provides a simple model for repeat and indel structure.</title>
        <authorList>
            <person name="Muzzey D."/>
            <person name="Schwartz K."/>
            <person name="Weissman J.S."/>
            <person name="Sherlock G."/>
        </authorList>
    </citation>
    <scope>NUCLEOTIDE SEQUENCE [LARGE SCALE GENOMIC DNA]</scope>
    <scope>GENOME REANNOTATION</scope>
    <source>
        <strain>SC5314 / ATCC MYA-2876</strain>
    </source>
</reference>
<gene>
    <name type="primary">RRP36</name>
    <name type="ordered locus">CAALFM_CR07030CA</name>
    <name type="ORF">CaO19.2362</name>
    <name type="ORF">CaO19.9898</name>
</gene>
<evidence type="ECO:0000250" key="1"/>
<evidence type="ECO:0000255" key="2"/>
<evidence type="ECO:0000256" key="3">
    <source>
        <dbReference type="SAM" id="MobiDB-lite"/>
    </source>
</evidence>
<evidence type="ECO:0000305" key="4"/>
<sequence length="281" mass="32954">MSRGKTIRPSYYDEEESSQDELSHTLSKGRSNIGSQSDDEEMSKISFGALNRAQSKLNKHNQKHKTQEDNYKSSEEEFFDSDSDSDGPPEETSSKDTKKKKNKHAPSESSSKRPVSRIRDIPGLPSRKQQTLHTDIRFDAAYGKADLAKARKDYAFLDEYRKQEIANMESLLKDKKSKLNDDEREEIKLQLQSLKSRMDTLKNRDLENNILSNYKKQQMESFKEGKVNKPYFLKRSDKRKILQKAKFDSMKPKQREKAMERKRKKRLGKEFRQLEFKPTNR</sequence>